<gene>
    <name type="primary">UCHL3</name>
</gene>
<dbReference type="EC" id="3.4.19.12" evidence="2"/>
<dbReference type="EMBL" id="BC110247">
    <property type="protein sequence ID" value="AAI10248.1"/>
    <property type="molecule type" value="mRNA"/>
</dbReference>
<dbReference type="RefSeq" id="NP_001035631.1">
    <property type="nucleotide sequence ID" value="NM_001040541.2"/>
</dbReference>
<dbReference type="BMRB" id="Q2TBG8"/>
<dbReference type="SMR" id="Q2TBG8"/>
<dbReference type="FunCoup" id="Q2TBG8">
    <property type="interactions" value="2098"/>
</dbReference>
<dbReference type="IntAct" id="Q2TBG8">
    <property type="interactions" value="1"/>
</dbReference>
<dbReference type="STRING" id="9913.ENSBTAP00000065088"/>
<dbReference type="MEROPS" id="C12.003"/>
<dbReference type="PaxDb" id="9913-ENSBTAP00000035448"/>
<dbReference type="PeptideAtlas" id="Q2TBG8"/>
<dbReference type="GeneID" id="520170"/>
<dbReference type="KEGG" id="bta:520170"/>
<dbReference type="CTD" id="7347"/>
<dbReference type="VEuPathDB" id="HostDB:ENSBTAG00000008024"/>
<dbReference type="eggNOG" id="KOG1415">
    <property type="taxonomic scope" value="Eukaryota"/>
</dbReference>
<dbReference type="HOGENOM" id="CLU_054406_1_1_1"/>
<dbReference type="InParanoid" id="Q2TBG8"/>
<dbReference type="OMA" id="IDLHYVC"/>
<dbReference type="OrthoDB" id="427186at2759"/>
<dbReference type="TreeFam" id="TF316166"/>
<dbReference type="Reactome" id="R-BTA-5689603">
    <property type="pathway name" value="UCH proteinases"/>
</dbReference>
<dbReference type="Reactome" id="R-BTA-8866652">
    <property type="pathway name" value="Synthesis of active ubiquitin: roles of E1 and E2 enzymes"/>
</dbReference>
<dbReference type="Reactome" id="R-BTA-8951664">
    <property type="pathway name" value="Neddylation"/>
</dbReference>
<dbReference type="Proteomes" id="UP000009136">
    <property type="component" value="Chromosome 12"/>
</dbReference>
<dbReference type="Bgee" id="ENSBTAG00000008024">
    <property type="expression patterns" value="Expressed in oocyte and 105 other cell types or tissues"/>
</dbReference>
<dbReference type="GO" id="GO:0005737">
    <property type="term" value="C:cytoplasm"/>
    <property type="evidence" value="ECO:0000318"/>
    <property type="project" value="GO_Central"/>
</dbReference>
<dbReference type="GO" id="GO:0004843">
    <property type="term" value="F:cysteine-type deubiquitinase activity"/>
    <property type="evidence" value="ECO:0000318"/>
    <property type="project" value="GO_Central"/>
</dbReference>
<dbReference type="GO" id="GO:0030163">
    <property type="term" value="P:protein catabolic process"/>
    <property type="evidence" value="ECO:0000318"/>
    <property type="project" value="GO_Central"/>
</dbReference>
<dbReference type="GO" id="GO:0006511">
    <property type="term" value="P:ubiquitin-dependent protein catabolic process"/>
    <property type="evidence" value="ECO:0007669"/>
    <property type="project" value="InterPro"/>
</dbReference>
<dbReference type="CDD" id="cd09616">
    <property type="entry name" value="Peptidase_C12_UCH_L1_L3"/>
    <property type="match status" value="1"/>
</dbReference>
<dbReference type="FunFam" id="3.40.532.10:FF:000005">
    <property type="entry name" value="Ubiquitin carboxyl-terminal hydrolase"/>
    <property type="match status" value="1"/>
</dbReference>
<dbReference type="Gene3D" id="3.40.532.10">
    <property type="entry name" value="Peptidase C12, ubiquitin carboxyl-terminal hydrolase"/>
    <property type="match status" value="1"/>
</dbReference>
<dbReference type="InterPro" id="IPR038765">
    <property type="entry name" value="Papain-like_cys_pep_sf"/>
</dbReference>
<dbReference type="InterPro" id="IPR001578">
    <property type="entry name" value="Peptidase_C12_UCH"/>
</dbReference>
<dbReference type="InterPro" id="IPR036959">
    <property type="entry name" value="Peptidase_C12_UCH_sf"/>
</dbReference>
<dbReference type="InterPro" id="IPR057254">
    <property type="entry name" value="UCH_AS"/>
</dbReference>
<dbReference type="PANTHER" id="PTHR10589">
    <property type="entry name" value="UBIQUITIN CARBOXYL-TERMINAL HYDROLASE"/>
    <property type="match status" value="1"/>
</dbReference>
<dbReference type="PANTHER" id="PTHR10589:SF24">
    <property type="entry name" value="UBIQUITIN CARBOXYL-TERMINAL HYDROLASE ISOZYME L3"/>
    <property type="match status" value="1"/>
</dbReference>
<dbReference type="Pfam" id="PF01088">
    <property type="entry name" value="Peptidase_C12"/>
    <property type="match status" value="1"/>
</dbReference>
<dbReference type="PRINTS" id="PR00707">
    <property type="entry name" value="UBCTHYDRLASE"/>
</dbReference>
<dbReference type="SUPFAM" id="SSF54001">
    <property type="entry name" value="Cysteine proteinases"/>
    <property type="match status" value="1"/>
</dbReference>
<dbReference type="PROSITE" id="PS00140">
    <property type="entry name" value="UCH_1"/>
    <property type="match status" value="1"/>
</dbReference>
<dbReference type="PROSITE" id="PS52048">
    <property type="entry name" value="UCH_DOMAIN"/>
    <property type="match status" value="1"/>
</dbReference>
<evidence type="ECO:0000250" key="1"/>
<evidence type="ECO:0000250" key="2">
    <source>
        <dbReference type="UniProtKB" id="P15374"/>
    </source>
</evidence>
<evidence type="ECO:0000255" key="3">
    <source>
        <dbReference type="PROSITE-ProRule" id="PRU01393"/>
    </source>
</evidence>
<evidence type="ECO:0000255" key="4">
    <source>
        <dbReference type="PROSITE-ProRule" id="PRU10091"/>
    </source>
</evidence>
<evidence type="ECO:0000305" key="5"/>
<comment type="function">
    <text evidence="1">Deubiquitinating enzyme (DUB) that controls levels of cellular ubiquitin through processing of ubiquitin precursors and ubiquitinated proteins. Thiol protease that recognizes and hydrolyzes a peptide bond at the C-terminal glycine of either ubiquitin or NEDD8. Has a 10-fold preference for Arg and Lys at position P3''. Deubiquitinates ENAC in apical compartments, thereby regulating apical membrane recycling. Indirectly increases the phosphorylation of IGFIR, AKT and FOXO1 and promotes insulin-signaling and insulin-induced adipogenesis. Required for stress-response retinal, skeletal muscle and germ cell maintenance. May be involved in working memory. Can hydrolyze UBB(+1), a mutated form of ubiquitin which is not effectively degraded by the proteasome (By similarity).</text>
</comment>
<comment type="catalytic activity">
    <reaction evidence="2">
        <text>Thiol-dependent hydrolysis of ester, thioester, amide, peptide and isopeptide bonds formed by the C-terminal Gly of ubiquitin (a 76-residue protein attached to proteins as an intracellular targeting signal).</text>
        <dbReference type="EC" id="3.4.19.12"/>
    </reaction>
</comment>
<comment type="activity regulation">
    <text evidence="1">Inhibited by monoubiquitin and diubiquitin.</text>
</comment>
<comment type="subunit">
    <text evidence="1">Preferentially binds diubiquitin; the interaction does not hydrolyze diubiquitin but, in vitro, inhibits the hydrolyzing activity on other substrates.</text>
</comment>
<comment type="subcellular location">
    <subcellularLocation>
        <location evidence="1">Cytoplasm</location>
    </subcellularLocation>
</comment>
<comment type="similarity">
    <text evidence="5">Belongs to the peptidase C12 family.</text>
</comment>
<reference key="1">
    <citation type="submission" date="2005-11" db="EMBL/GenBank/DDBJ databases">
        <authorList>
            <consortium name="NIH - Mammalian Gene Collection (MGC) project"/>
        </authorList>
    </citation>
    <scope>NUCLEOTIDE SEQUENCE [LARGE SCALE MRNA]</scope>
    <source>
        <strain>Crossbred X Angus</strain>
        <tissue>Liver</tissue>
    </source>
</reference>
<feature type="chain" id="PRO_0000239741" description="Ubiquitin carboxyl-terminal hydrolase isozyme L3">
    <location>
        <begin position="1"/>
        <end position="230"/>
    </location>
</feature>
<feature type="domain" description="UCH catalytic" evidence="3">
    <location>
        <begin position="5"/>
        <end position="229"/>
    </location>
</feature>
<feature type="region of interest" description="Interaction with ubiquitin" evidence="2">
    <location>
        <begin position="8"/>
        <end position="13"/>
    </location>
</feature>
<feature type="region of interest" description="Interaction with ubiquitin. Crossover loop which restricts access of large ubiquitin adducts to the active site" evidence="2">
    <location>
        <begin position="152"/>
        <end position="159"/>
    </location>
</feature>
<feature type="region of interest" description="Interaction with ubiquitin" evidence="2">
    <location>
        <begin position="219"/>
        <end position="224"/>
    </location>
</feature>
<feature type="active site" description="Nucleophile" evidence="3 4">
    <location>
        <position position="95"/>
    </location>
</feature>
<feature type="active site" description="Proton donor" evidence="3">
    <location>
        <position position="169"/>
    </location>
</feature>
<feature type="site" description="Transition state stabilizer" evidence="3">
    <location>
        <position position="89"/>
    </location>
</feature>
<feature type="site" description="Important for enzyme activity" evidence="3">
    <location>
        <position position="184"/>
    </location>
</feature>
<feature type="modified residue" description="Phosphoserine" evidence="2">
    <location>
        <position position="130"/>
    </location>
</feature>
<accession>Q2TBG8</accession>
<protein>
    <recommendedName>
        <fullName>Ubiquitin carboxyl-terminal hydrolase isozyme L3</fullName>
        <shortName>UCH-L3</shortName>
        <ecNumber evidence="2">3.4.19.12</ecNumber>
    </recommendedName>
    <alternativeName>
        <fullName>Ubiquitin thioesterase L3</fullName>
    </alternativeName>
</protein>
<sequence length="230" mass="26182">MEGQRWLPLEANPEVTNQFLKQLGLHPNWQFVDVYGMDPELLSMVPRPVCAVLLLFPITEKYEVFRTEEEEKIKSQGQDVTSSVYFMKQTISNACGTIGLIHAIANNKDKMHFESGSTLKKFLEESASMSPEERARYLENYDAIRVTHETSAHEGQTEAPNIDEKVDLHFIALVHVDGHLYELDGRKPFPINHGETSDETLLEDAIEVCKKFMERDPDELRFNAIALSAA</sequence>
<name>UCHL3_BOVIN</name>
<proteinExistence type="evidence at transcript level"/>
<organism>
    <name type="scientific">Bos taurus</name>
    <name type="common">Bovine</name>
    <dbReference type="NCBI Taxonomy" id="9913"/>
    <lineage>
        <taxon>Eukaryota</taxon>
        <taxon>Metazoa</taxon>
        <taxon>Chordata</taxon>
        <taxon>Craniata</taxon>
        <taxon>Vertebrata</taxon>
        <taxon>Euteleostomi</taxon>
        <taxon>Mammalia</taxon>
        <taxon>Eutheria</taxon>
        <taxon>Laurasiatheria</taxon>
        <taxon>Artiodactyla</taxon>
        <taxon>Ruminantia</taxon>
        <taxon>Pecora</taxon>
        <taxon>Bovidae</taxon>
        <taxon>Bovinae</taxon>
        <taxon>Bos</taxon>
    </lineage>
</organism>
<keyword id="KW-0963">Cytoplasm</keyword>
<keyword id="KW-0378">Hydrolase</keyword>
<keyword id="KW-0597">Phosphoprotein</keyword>
<keyword id="KW-0645">Protease</keyword>
<keyword id="KW-1185">Reference proteome</keyword>
<keyword id="KW-0788">Thiol protease</keyword>
<keyword id="KW-0833">Ubl conjugation pathway</keyword>